<protein>
    <recommendedName>
        <fullName evidence="1">UPF0060 membrane protein Psyr_3752</fullName>
    </recommendedName>
</protein>
<sequence>MLNYLWFFLAALFEIFGCYAFWLWLRQGKSALWVIPALVSLTVFALLLTRVEAAYAGRAYAAYGGIYIVASIAWLGLVERVRPLGTDWLGLAFCVIGATIILLGPRWSAA</sequence>
<accession>Q4ZPY9</accession>
<organism>
    <name type="scientific">Pseudomonas syringae pv. syringae (strain B728a)</name>
    <dbReference type="NCBI Taxonomy" id="205918"/>
    <lineage>
        <taxon>Bacteria</taxon>
        <taxon>Pseudomonadati</taxon>
        <taxon>Pseudomonadota</taxon>
        <taxon>Gammaproteobacteria</taxon>
        <taxon>Pseudomonadales</taxon>
        <taxon>Pseudomonadaceae</taxon>
        <taxon>Pseudomonas</taxon>
        <taxon>Pseudomonas syringae</taxon>
    </lineage>
</organism>
<feature type="chain" id="PRO_0000282249" description="UPF0060 membrane protein Psyr_3752">
    <location>
        <begin position="1"/>
        <end position="110"/>
    </location>
</feature>
<feature type="transmembrane region" description="Helical" evidence="1">
    <location>
        <begin position="5"/>
        <end position="25"/>
    </location>
</feature>
<feature type="transmembrane region" description="Helical" evidence="1">
    <location>
        <begin position="28"/>
        <end position="48"/>
    </location>
</feature>
<feature type="transmembrane region" description="Helical" evidence="1">
    <location>
        <begin position="59"/>
        <end position="79"/>
    </location>
</feature>
<feature type="transmembrane region" description="Helical" evidence="1">
    <location>
        <begin position="84"/>
        <end position="104"/>
    </location>
</feature>
<evidence type="ECO:0000255" key="1">
    <source>
        <dbReference type="HAMAP-Rule" id="MF_00010"/>
    </source>
</evidence>
<keyword id="KW-0997">Cell inner membrane</keyword>
<keyword id="KW-1003">Cell membrane</keyword>
<keyword id="KW-0472">Membrane</keyword>
<keyword id="KW-0812">Transmembrane</keyword>
<keyword id="KW-1133">Transmembrane helix</keyword>
<dbReference type="EMBL" id="CP000075">
    <property type="protein sequence ID" value="AAY38783.1"/>
    <property type="molecule type" value="Genomic_DNA"/>
</dbReference>
<dbReference type="RefSeq" id="WP_003393231.1">
    <property type="nucleotide sequence ID" value="NC_007005.1"/>
</dbReference>
<dbReference type="RefSeq" id="YP_236821.1">
    <property type="nucleotide sequence ID" value="NC_007005.1"/>
</dbReference>
<dbReference type="SMR" id="Q4ZPY9"/>
<dbReference type="STRING" id="205918.Psyr_3752"/>
<dbReference type="KEGG" id="psb:Psyr_3752"/>
<dbReference type="PATRIC" id="fig|205918.7.peg.3852"/>
<dbReference type="eggNOG" id="COG1742">
    <property type="taxonomic scope" value="Bacteria"/>
</dbReference>
<dbReference type="HOGENOM" id="CLU_117653_2_0_6"/>
<dbReference type="OrthoDB" id="123240at2"/>
<dbReference type="Proteomes" id="UP000000426">
    <property type="component" value="Chromosome"/>
</dbReference>
<dbReference type="GO" id="GO:0005886">
    <property type="term" value="C:plasma membrane"/>
    <property type="evidence" value="ECO:0007669"/>
    <property type="project" value="UniProtKB-SubCell"/>
</dbReference>
<dbReference type="HAMAP" id="MF_00010">
    <property type="entry name" value="UPF0060"/>
    <property type="match status" value="1"/>
</dbReference>
<dbReference type="InterPro" id="IPR003844">
    <property type="entry name" value="UPF0060"/>
</dbReference>
<dbReference type="NCBIfam" id="NF002586">
    <property type="entry name" value="PRK02237.1"/>
    <property type="match status" value="1"/>
</dbReference>
<dbReference type="PANTHER" id="PTHR36116">
    <property type="entry name" value="UPF0060 MEMBRANE PROTEIN YNFA"/>
    <property type="match status" value="1"/>
</dbReference>
<dbReference type="PANTHER" id="PTHR36116:SF1">
    <property type="entry name" value="UPF0060 MEMBRANE PROTEIN YNFA"/>
    <property type="match status" value="1"/>
</dbReference>
<dbReference type="Pfam" id="PF02694">
    <property type="entry name" value="UPF0060"/>
    <property type="match status" value="1"/>
</dbReference>
<dbReference type="SUPFAM" id="SSF103481">
    <property type="entry name" value="Multidrug resistance efflux transporter EmrE"/>
    <property type="match status" value="1"/>
</dbReference>
<gene>
    <name type="ordered locus">Psyr_3752</name>
</gene>
<proteinExistence type="inferred from homology"/>
<name>Y3752_PSEU2</name>
<comment type="subcellular location">
    <subcellularLocation>
        <location evidence="1">Cell inner membrane</location>
        <topology evidence="1">Multi-pass membrane protein</topology>
    </subcellularLocation>
</comment>
<comment type="similarity">
    <text evidence="1">Belongs to the UPF0060 family.</text>
</comment>
<reference key="1">
    <citation type="journal article" date="2005" name="Proc. Natl. Acad. Sci. U.S.A.">
        <title>Comparison of the complete genome sequences of Pseudomonas syringae pv. syringae B728a and pv. tomato DC3000.</title>
        <authorList>
            <person name="Feil H."/>
            <person name="Feil W.S."/>
            <person name="Chain P."/>
            <person name="Larimer F."/>
            <person name="Dibartolo G."/>
            <person name="Copeland A."/>
            <person name="Lykidis A."/>
            <person name="Trong S."/>
            <person name="Nolan M."/>
            <person name="Goltsman E."/>
            <person name="Thiel J."/>
            <person name="Malfatti S."/>
            <person name="Loper J.E."/>
            <person name="Lapidus A."/>
            <person name="Detter J.C."/>
            <person name="Land M."/>
            <person name="Richardson P.M."/>
            <person name="Kyrpides N.C."/>
            <person name="Ivanova N."/>
            <person name="Lindow S.E."/>
        </authorList>
    </citation>
    <scope>NUCLEOTIDE SEQUENCE [LARGE SCALE GENOMIC DNA]</scope>
    <source>
        <strain>B728a</strain>
    </source>
</reference>